<reference key="1">
    <citation type="journal article" date="1997" name="Biochem. J.">
        <title>Regulation of rat AMP deaminase 3 (isoform C) by development and skeletal muscle fibre type.</title>
        <authorList>
            <person name="Mahnke-Zizelman D.K."/>
            <person name="D'Cunha J."/>
            <person name="Wojnar J.M."/>
            <person name="Brogley M.A."/>
            <person name="Sabina R.L."/>
        </authorList>
    </citation>
    <scope>NUCLEOTIDE SEQUENCE [MRNA]</scope>
    <scope>FUNCTION</scope>
    <scope>CATALYTIC ACTIVITY</scope>
    <scope>PATHWAY</scope>
    <scope>TISSUE SPECIFICITY</scope>
    <source>
        <tissue>Heart</tissue>
    </source>
</reference>
<reference key="2">
    <citation type="journal article" date="2012" name="Nat. Commun.">
        <title>Quantitative maps of protein phosphorylation sites across 14 different rat organs and tissues.</title>
        <authorList>
            <person name="Lundby A."/>
            <person name="Secher A."/>
            <person name="Lage K."/>
            <person name="Nordsborg N.B."/>
            <person name="Dmytriyev A."/>
            <person name="Lundby C."/>
            <person name="Olsen J.V."/>
        </authorList>
    </citation>
    <scope>PHOSPHORYLATION [LARGE SCALE ANALYSIS] AT SER-106</scope>
    <scope>IDENTIFICATION BY MASS SPECTROMETRY [LARGE SCALE ANALYSIS]</scope>
</reference>
<proteinExistence type="evidence at protein level"/>
<keyword id="KW-0025">Alternative splicing</keyword>
<keyword id="KW-0378">Hydrolase</keyword>
<keyword id="KW-0479">Metal-binding</keyword>
<keyword id="KW-0546">Nucleotide metabolism</keyword>
<keyword id="KW-0597">Phosphoprotein</keyword>
<keyword id="KW-1185">Reference proteome</keyword>
<keyword id="KW-0862">Zinc</keyword>
<protein>
    <recommendedName>
        <fullName evidence="6">AMP deaminase 3</fullName>
        <ecNumber evidence="4">3.5.4.6</ecNumber>
    </recommendedName>
    <alternativeName>
        <fullName>AMP deaminase isoform E</fullName>
    </alternativeName>
</protein>
<gene>
    <name evidence="7" type="primary">Ampd3</name>
</gene>
<name>AMPD3_RAT</name>
<feature type="chain" id="PRO_0000194412" description="AMP deaminase 3">
    <location>
        <begin position="1"/>
        <end position="765"/>
    </location>
</feature>
<feature type="active site" description="Proton acceptor" evidence="3">
    <location>
        <position position="606"/>
    </location>
</feature>
<feature type="binding site" evidence="1">
    <location>
        <position position="315"/>
    </location>
    <ligand>
        <name>Zn(2+)</name>
        <dbReference type="ChEBI" id="CHEBI:29105"/>
        <note>catalytic</note>
    </ligand>
</feature>
<feature type="binding site" evidence="1">
    <location>
        <position position="317"/>
    </location>
    <ligand>
        <name>substrate</name>
    </ligand>
</feature>
<feature type="binding site" evidence="1">
    <location>
        <position position="317"/>
    </location>
    <ligand>
        <name>Zn(2+)</name>
        <dbReference type="ChEBI" id="CHEBI:29105"/>
        <note>catalytic</note>
    </ligand>
</feature>
<feature type="binding site" evidence="1">
    <location>
        <begin position="386"/>
        <end position="391"/>
    </location>
    <ligand>
        <name>substrate</name>
    </ligand>
</feature>
<feature type="binding site" evidence="1">
    <location>
        <position position="584"/>
    </location>
    <ligand>
        <name>Zn(2+)</name>
        <dbReference type="ChEBI" id="CHEBI:29105"/>
        <note>catalytic</note>
    </ligand>
</feature>
<feature type="binding site" evidence="1">
    <location>
        <position position="587"/>
    </location>
    <ligand>
        <name>substrate</name>
    </ligand>
</feature>
<feature type="binding site" evidence="1">
    <location>
        <position position="661"/>
    </location>
    <ligand>
        <name>Zn(2+)</name>
        <dbReference type="ChEBI" id="CHEBI:29105"/>
        <note>catalytic</note>
    </ligand>
</feature>
<feature type="binding site" evidence="1">
    <location>
        <begin position="662"/>
        <end position="665"/>
    </location>
    <ligand>
        <name>substrate</name>
    </ligand>
</feature>
<feature type="modified residue" description="Phosphoserine" evidence="2">
    <location>
        <position position="85"/>
    </location>
</feature>
<feature type="modified residue" description="Phosphoserine" evidence="8">
    <location>
        <position position="106"/>
    </location>
</feature>
<sequence>MPRQFPKLNMSDLDEHVRLLAEKVFAKVLREEDSKDVMSLFTVPKDCPIGQKEAKERELQKELAEQKSVETAKRKKSFKMIRSQSMSLQMPTQDWKGPPSVSPAMSPTTPLVLGAASKPGLAPYDMPEYQRATISGDYCAGITMEDYEQAAKSLAKALMIREKYARLAYHRFPRTTAQYLAHQGESVPLEEGLPDFHPPPLPQEDPYCLDDAPPNLGYLVRMQGGVLFVYDNQTMLERQEPHSLPYPDLETYIVDMSHILALITDGPTKTYCHRRLNFLESKFSLHEMLNEMSEFKELKSNPHRDFYNVRKVDTHIHAAACMNQKHLLRFIKYTYQTEPDRTVAEKLGRKITLRQVFDSLHMDPYDLTVDSLDVHAGRQTFHGFDKFNSKYNPVGASELRDLYLKTENYLGGEYFARMVKEVARELEDSKYQYSEPRLSIYGRSPKEWSSLARWFIQHKVYSPNMRWIIQVPRIYDIFRSKKLLPSFGKMLENIFLPLFQATINPQDHRELHLFLKYVTGFDSVDDESKHSDHMFSDKSPSPDLWTSEQNPPYSYYLYYMYANIMVLNNLRRERGLSTFLFRPHCGEAGSITHLVSAFLTADNISHGLLLKKSPVLQYLYYLAQIPIAMSPLSNNSLFLEYSKNPLREFLHKGLHVSLSTDDPMQFHYTKEALMEEYAIAAQVWKLSTCDLCEIARNSVLQSGLSHQEKQKFLGQNYYKEGPEGNDIRKTNVAQIRMAFRYETLCNELSFLSDAMKSEEITALAD</sequence>
<comment type="function">
    <text evidence="6">AMP deaminase plays a critical role in energy metabolism.</text>
</comment>
<comment type="catalytic activity">
    <reaction evidence="4">
        <text>AMP + H2O + H(+) = IMP + NH4(+)</text>
        <dbReference type="Rhea" id="RHEA:14777"/>
        <dbReference type="ChEBI" id="CHEBI:15377"/>
        <dbReference type="ChEBI" id="CHEBI:15378"/>
        <dbReference type="ChEBI" id="CHEBI:28938"/>
        <dbReference type="ChEBI" id="CHEBI:58053"/>
        <dbReference type="ChEBI" id="CHEBI:456215"/>
        <dbReference type="EC" id="3.5.4.6"/>
    </reaction>
    <physiologicalReaction direction="left-to-right" evidence="6">
        <dbReference type="Rhea" id="RHEA:14778"/>
    </physiologicalReaction>
</comment>
<comment type="cofactor">
    <cofactor evidence="1">
        <name>Zn(2+)</name>
        <dbReference type="ChEBI" id="CHEBI:29105"/>
    </cofactor>
    <text evidence="1">Binds 1 zinc ion per subunit.</text>
</comment>
<comment type="pathway">
    <text evidence="6">Purine metabolism; IMP biosynthesis via salvage pathway; IMP from AMP: step 1/1.</text>
</comment>
<comment type="subunit">
    <text evidence="1">Homotetramer.</text>
</comment>
<comment type="alternative products">
    <event type="alternative splicing"/>
    <isoform>
        <id>O09178-1</id>
        <name>1</name>
        <sequence type="displayed"/>
    </isoform>
    <text>A number of isoforms are produced.</text>
</comment>
<comment type="tissue specificity">
    <text evidence="4">Expressed in adult tissues such as aorta, heart, kidney, lung, muscle and thyroid. Weakly expressed in thyroid and not detected in liver.</text>
</comment>
<comment type="similarity">
    <text evidence="5">Belongs to the metallo-dependent hydrolases superfamily. Adenosine and AMP deaminases family.</text>
</comment>
<comment type="sequence caution" evidence="5">
    <conflict type="erroneous initiation">
        <sequence resource="EMBL-CDS" id="AAC53348"/>
    </conflict>
    <text>Extended N-terminus.</text>
</comment>
<evidence type="ECO:0000250" key="1"/>
<evidence type="ECO:0000250" key="2">
    <source>
        <dbReference type="UniProtKB" id="Q01432"/>
    </source>
</evidence>
<evidence type="ECO:0000255" key="3">
    <source>
        <dbReference type="PROSITE-ProRule" id="PRU10104"/>
    </source>
</evidence>
<evidence type="ECO:0000269" key="4">
    <source>
    </source>
</evidence>
<evidence type="ECO:0000305" key="5"/>
<evidence type="ECO:0000305" key="6">
    <source>
    </source>
</evidence>
<evidence type="ECO:0000312" key="7">
    <source>
        <dbReference type="RGD" id="2111"/>
    </source>
</evidence>
<evidence type="ECO:0007744" key="8">
    <source>
    </source>
</evidence>
<organism>
    <name type="scientific">Rattus norvegicus</name>
    <name type="common">Rat</name>
    <dbReference type="NCBI Taxonomy" id="10116"/>
    <lineage>
        <taxon>Eukaryota</taxon>
        <taxon>Metazoa</taxon>
        <taxon>Chordata</taxon>
        <taxon>Craniata</taxon>
        <taxon>Vertebrata</taxon>
        <taxon>Euteleostomi</taxon>
        <taxon>Mammalia</taxon>
        <taxon>Eutheria</taxon>
        <taxon>Euarchontoglires</taxon>
        <taxon>Glires</taxon>
        <taxon>Rodentia</taxon>
        <taxon>Myomorpha</taxon>
        <taxon>Muroidea</taxon>
        <taxon>Muridae</taxon>
        <taxon>Murinae</taxon>
        <taxon>Rattus</taxon>
    </lineage>
</organism>
<dbReference type="EC" id="3.5.4.6" evidence="4"/>
<dbReference type="EMBL" id="U90888">
    <property type="protein sequence ID" value="AAC53348.1"/>
    <property type="status" value="ALT_INIT"/>
    <property type="molecule type" value="mRNA"/>
</dbReference>
<dbReference type="RefSeq" id="NP_113732.1">
    <property type="nucleotide sequence ID" value="NM_031544.1"/>
</dbReference>
<dbReference type="SMR" id="O09178"/>
<dbReference type="BioGRID" id="247167">
    <property type="interactions" value="1"/>
</dbReference>
<dbReference type="FunCoup" id="O09178">
    <property type="interactions" value="825"/>
</dbReference>
<dbReference type="STRING" id="10116.ENSRNOP00000024933"/>
<dbReference type="BindingDB" id="O09178"/>
<dbReference type="iPTMnet" id="O09178"/>
<dbReference type="PhosphoSitePlus" id="O09178"/>
<dbReference type="jPOST" id="O09178"/>
<dbReference type="PaxDb" id="10116-ENSRNOP00000024933"/>
<dbReference type="DNASU" id="25095"/>
<dbReference type="GeneID" id="25095"/>
<dbReference type="KEGG" id="rno:25095"/>
<dbReference type="UCSC" id="RGD:2111">
    <molecule id="O09178-1"/>
    <property type="organism name" value="rat"/>
</dbReference>
<dbReference type="AGR" id="RGD:2111"/>
<dbReference type="CTD" id="272"/>
<dbReference type="RGD" id="2111">
    <property type="gene designation" value="Ampd3"/>
</dbReference>
<dbReference type="eggNOG" id="KOG1096">
    <property type="taxonomic scope" value="Eukaryota"/>
</dbReference>
<dbReference type="InParanoid" id="O09178"/>
<dbReference type="PhylomeDB" id="O09178"/>
<dbReference type="Reactome" id="R-RNO-6798695">
    <property type="pathway name" value="Neutrophil degranulation"/>
</dbReference>
<dbReference type="Reactome" id="R-RNO-74217">
    <property type="pathway name" value="Purine salvage"/>
</dbReference>
<dbReference type="UniPathway" id="UPA00591">
    <property type="reaction ID" value="UER00663"/>
</dbReference>
<dbReference type="PRO" id="PR:O09178"/>
<dbReference type="Proteomes" id="UP000002494">
    <property type="component" value="Unplaced"/>
</dbReference>
<dbReference type="GO" id="GO:0005829">
    <property type="term" value="C:cytosol"/>
    <property type="evidence" value="ECO:0000318"/>
    <property type="project" value="GO_Central"/>
</dbReference>
<dbReference type="GO" id="GO:0003876">
    <property type="term" value="F:AMP deaminase activity"/>
    <property type="evidence" value="ECO:0000314"/>
    <property type="project" value="RGD"/>
</dbReference>
<dbReference type="GO" id="GO:0046872">
    <property type="term" value="F:metal ion binding"/>
    <property type="evidence" value="ECO:0007669"/>
    <property type="project" value="UniProtKB-KW"/>
</dbReference>
<dbReference type="GO" id="GO:0046032">
    <property type="term" value="P:ADP catabolic process"/>
    <property type="evidence" value="ECO:0000266"/>
    <property type="project" value="RGD"/>
</dbReference>
<dbReference type="GO" id="GO:0046031">
    <property type="term" value="P:ADP metabolic process"/>
    <property type="evidence" value="ECO:0000266"/>
    <property type="project" value="RGD"/>
</dbReference>
<dbReference type="GO" id="GO:0006196">
    <property type="term" value="P:AMP catabolic process"/>
    <property type="evidence" value="ECO:0000266"/>
    <property type="project" value="RGD"/>
</dbReference>
<dbReference type="GO" id="GO:0046033">
    <property type="term" value="P:AMP metabolic process"/>
    <property type="evidence" value="ECO:0000266"/>
    <property type="project" value="RGD"/>
</dbReference>
<dbReference type="GO" id="GO:0046034">
    <property type="term" value="P:ATP metabolic process"/>
    <property type="evidence" value="ECO:0000266"/>
    <property type="project" value="RGD"/>
</dbReference>
<dbReference type="GO" id="GO:0097009">
    <property type="term" value="P:energy homeostasis"/>
    <property type="evidence" value="ECO:0000266"/>
    <property type="project" value="RGD"/>
</dbReference>
<dbReference type="GO" id="GO:0034101">
    <property type="term" value="P:erythrocyte homeostasis"/>
    <property type="evidence" value="ECO:0000266"/>
    <property type="project" value="RGD"/>
</dbReference>
<dbReference type="GO" id="GO:0046039">
    <property type="term" value="P:GTP metabolic process"/>
    <property type="evidence" value="ECO:0000266"/>
    <property type="project" value="RGD"/>
</dbReference>
<dbReference type="GO" id="GO:0006188">
    <property type="term" value="P:IMP biosynthetic process"/>
    <property type="evidence" value="ECO:0000266"/>
    <property type="project" value="RGD"/>
</dbReference>
<dbReference type="GO" id="GO:0032264">
    <property type="term" value="P:IMP salvage"/>
    <property type="evidence" value="ECO:0000266"/>
    <property type="project" value="RGD"/>
</dbReference>
<dbReference type="CDD" id="cd01319">
    <property type="entry name" value="AMPD"/>
    <property type="match status" value="1"/>
</dbReference>
<dbReference type="FunFam" id="4.10.800.20:FF:000001">
    <property type="entry name" value="AMP deaminase"/>
    <property type="match status" value="1"/>
</dbReference>
<dbReference type="FunFam" id="3.20.20.140:FF:000171">
    <property type="entry name" value="AMP deaminase 3"/>
    <property type="match status" value="1"/>
</dbReference>
<dbReference type="Gene3D" id="4.10.800.20">
    <property type="match status" value="1"/>
</dbReference>
<dbReference type="Gene3D" id="3.20.20.140">
    <property type="entry name" value="Metal-dependent hydrolases"/>
    <property type="match status" value="1"/>
</dbReference>
<dbReference type="InterPro" id="IPR006650">
    <property type="entry name" value="A/AMP_deam_AS"/>
</dbReference>
<dbReference type="InterPro" id="IPR006329">
    <property type="entry name" value="AMPD"/>
</dbReference>
<dbReference type="InterPro" id="IPR032466">
    <property type="entry name" value="Metal_Hydrolase"/>
</dbReference>
<dbReference type="NCBIfam" id="TIGR01429">
    <property type="entry name" value="AMP_deaminase"/>
    <property type="match status" value="1"/>
</dbReference>
<dbReference type="PANTHER" id="PTHR11359">
    <property type="entry name" value="AMP DEAMINASE"/>
    <property type="match status" value="1"/>
</dbReference>
<dbReference type="PANTHER" id="PTHR11359:SF2">
    <property type="entry name" value="AMP DEAMINASE 3"/>
    <property type="match status" value="1"/>
</dbReference>
<dbReference type="Pfam" id="PF19326">
    <property type="entry name" value="AMP_deaminase"/>
    <property type="match status" value="1"/>
</dbReference>
<dbReference type="PIRSF" id="PIRSF001251">
    <property type="entry name" value="AMP_deaminase_met"/>
    <property type="match status" value="1"/>
</dbReference>
<dbReference type="SUPFAM" id="SSF51556">
    <property type="entry name" value="Metallo-dependent hydrolases"/>
    <property type="match status" value="1"/>
</dbReference>
<dbReference type="PROSITE" id="PS00485">
    <property type="entry name" value="A_DEAMINASE"/>
    <property type="match status" value="1"/>
</dbReference>
<accession>O09178</accession>